<protein>
    <recommendedName>
        <fullName>Uncharacterized protein YibT</fullName>
    </recommendedName>
</protein>
<dbReference type="EMBL" id="U00096">
    <property type="protein sequence ID" value="ABD18704.1"/>
    <property type="molecule type" value="Genomic_DNA"/>
</dbReference>
<dbReference type="EMBL" id="AP009048">
    <property type="protein sequence ID" value="BAE77691.1"/>
    <property type="molecule type" value="Genomic_DNA"/>
</dbReference>
<dbReference type="RefSeq" id="WP_000517100.1">
    <property type="nucleotide sequence ID" value="NZ_STEB01000024.1"/>
</dbReference>
<dbReference type="RefSeq" id="YP_588470.1">
    <property type="nucleotide sequence ID" value="NC_000913.3"/>
</dbReference>
<dbReference type="SMR" id="Q2M7R5"/>
<dbReference type="BioGRID" id="4261282">
    <property type="interactions" value="18"/>
</dbReference>
<dbReference type="BioGRID" id="853414">
    <property type="interactions" value="7"/>
</dbReference>
<dbReference type="FunCoup" id="Q2M7R5">
    <property type="interactions" value="65"/>
</dbReference>
<dbReference type="IntAct" id="Q2M7R5">
    <property type="interactions" value="8"/>
</dbReference>
<dbReference type="STRING" id="511145.b4554"/>
<dbReference type="jPOST" id="Q2M7R5"/>
<dbReference type="PaxDb" id="511145-b4554"/>
<dbReference type="EnsemblBacteria" id="ABD18704">
    <property type="protein sequence ID" value="ABD18704"/>
    <property type="gene ID" value="b4554"/>
</dbReference>
<dbReference type="GeneID" id="1450299"/>
<dbReference type="GeneID" id="93778313"/>
<dbReference type="KEGG" id="ecj:JW3576"/>
<dbReference type="KEGG" id="eco:b4554"/>
<dbReference type="KEGG" id="ecoc:C3026_19530"/>
<dbReference type="PATRIC" id="fig|511145.12.peg.3720"/>
<dbReference type="eggNOG" id="ENOG5032Z93">
    <property type="taxonomic scope" value="Bacteria"/>
</dbReference>
<dbReference type="HOGENOM" id="CLU_185147_0_0_6"/>
<dbReference type="InParanoid" id="Q2M7R5"/>
<dbReference type="OMA" id="PTCDQQE"/>
<dbReference type="OrthoDB" id="6578324at2"/>
<dbReference type="PhylomeDB" id="Q2M7R5"/>
<dbReference type="BioCyc" id="EcoCyc:MONOMER0-2690"/>
<dbReference type="PRO" id="PR:Q2M7R5"/>
<dbReference type="Proteomes" id="UP000000625">
    <property type="component" value="Chromosome"/>
</dbReference>
<name>YIBT_ECOLI</name>
<feature type="chain" id="PRO_0000263012" description="Uncharacterized protein YibT">
    <location>
        <begin position="1"/>
        <end position="69"/>
    </location>
</feature>
<proteinExistence type="predicted"/>
<accession>Q2M7R5</accession>
<accession>Q2EET7</accession>
<reference key="1">
    <citation type="journal article" date="1997" name="Science">
        <title>The complete genome sequence of Escherichia coli K-12.</title>
        <authorList>
            <person name="Blattner F.R."/>
            <person name="Plunkett G. III"/>
            <person name="Bloch C.A."/>
            <person name="Perna N.T."/>
            <person name="Burland V."/>
            <person name="Riley M."/>
            <person name="Collado-Vides J."/>
            <person name="Glasner J.D."/>
            <person name="Rode C.K."/>
            <person name="Mayhew G.F."/>
            <person name="Gregor J."/>
            <person name="Davis N.W."/>
            <person name="Kirkpatrick H.A."/>
            <person name="Goeden M.A."/>
            <person name="Rose D.J."/>
            <person name="Mau B."/>
            <person name="Shao Y."/>
        </authorList>
    </citation>
    <scope>NUCLEOTIDE SEQUENCE [LARGE SCALE GENOMIC DNA]</scope>
    <source>
        <strain>K12 / MG1655 / ATCC 47076</strain>
    </source>
</reference>
<reference key="2">
    <citation type="journal article" date="2006" name="Mol. Syst. Biol.">
        <title>Highly accurate genome sequences of Escherichia coli K-12 strains MG1655 and W3110.</title>
        <authorList>
            <person name="Hayashi K."/>
            <person name="Morooka N."/>
            <person name="Yamamoto Y."/>
            <person name="Fujita K."/>
            <person name="Isono K."/>
            <person name="Choi S."/>
            <person name="Ohtsubo E."/>
            <person name="Baba T."/>
            <person name="Wanner B.L."/>
            <person name="Mori H."/>
            <person name="Horiuchi T."/>
        </authorList>
    </citation>
    <scope>NUCLEOTIDE SEQUENCE [LARGE SCALE GENOMIC DNA]</scope>
    <source>
        <strain>K12 / W3110 / ATCC 27325 / DSM 5911</strain>
    </source>
</reference>
<keyword id="KW-1185">Reference proteome</keyword>
<sequence length="69" mass="7995">MGKLGENVPLLIDKAVDFMASSQAFREYLKKLPPRNAIPSGIPDESVPLYLQRLEYYRRLYRPKQVEGQ</sequence>
<organism>
    <name type="scientific">Escherichia coli (strain K12)</name>
    <dbReference type="NCBI Taxonomy" id="83333"/>
    <lineage>
        <taxon>Bacteria</taxon>
        <taxon>Pseudomonadati</taxon>
        <taxon>Pseudomonadota</taxon>
        <taxon>Gammaproteobacteria</taxon>
        <taxon>Enterobacterales</taxon>
        <taxon>Enterobacteriaceae</taxon>
        <taxon>Escherichia</taxon>
    </lineage>
</organism>
<gene>
    <name type="primary">yibT</name>
    <name type="ordered locus">b4554</name>
    <name type="ordered locus">JW3576</name>
</gene>